<feature type="chain" id="PRO_0000071629" description="Ribosyldihydronicotinamide dehydrogenase [quinone]">
    <location>
        <begin position="1"/>
        <end position="231"/>
    </location>
</feature>
<feature type="binding site" evidence="1">
    <location>
        <position position="12"/>
    </location>
    <ligand>
        <name>FAD</name>
        <dbReference type="ChEBI" id="CHEBI:57692"/>
    </ligand>
</feature>
<feature type="binding site" evidence="1">
    <location>
        <begin position="18"/>
        <end position="21"/>
    </location>
    <ligand>
        <name>FAD</name>
        <dbReference type="ChEBI" id="CHEBI:57692"/>
    </ligand>
</feature>
<feature type="binding site" evidence="1">
    <location>
        <begin position="104"/>
        <end position="107"/>
    </location>
    <ligand>
        <name>FAD</name>
        <dbReference type="ChEBI" id="CHEBI:57692"/>
    </ligand>
</feature>
<feature type="binding site" evidence="1">
    <location>
        <begin position="127"/>
        <end position="129"/>
    </location>
    <ligand>
        <name>substrate</name>
    </ligand>
</feature>
<feature type="binding site" evidence="1">
    <location>
        <begin position="148"/>
        <end position="151"/>
    </location>
    <ligand>
        <name>FAD</name>
        <dbReference type="ChEBI" id="CHEBI:57692"/>
    </ligand>
</feature>
<feature type="binding site" evidence="1">
    <location>
        <position position="156"/>
    </location>
    <ligand>
        <name>FAD</name>
        <dbReference type="ChEBI" id="CHEBI:57692"/>
    </ligand>
</feature>
<feature type="binding site" evidence="1">
    <location>
        <position position="174"/>
    </location>
    <ligand>
        <name>Zn(2+)</name>
        <dbReference type="ChEBI" id="CHEBI:29105"/>
    </ligand>
</feature>
<feature type="binding site" evidence="1">
    <location>
        <position position="178"/>
    </location>
    <ligand>
        <name>Zn(2+)</name>
        <dbReference type="ChEBI" id="CHEBI:29105"/>
    </ligand>
</feature>
<feature type="binding site" evidence="1">
    <location>
        <position position="194"/>
    </location>
    <ligand>
        <name>FAD</name>
        <dbReference type="ChEBI" id="CHEBI:57692"/>
    </ligand>
</feature>
<feature type="binding site" evidence="1">
    <location>
        <position position="201"/>
    </location>
    <ligand>
        <name>FAD</name>
        <dbReference type="ChEBI" id="CHEBI:57692"/>
    </ligand>
</feature>
<feature type="binding site" evidence="1">
    <location>
        <position position="223"/>
    </location>
    <ligand>
        <name>Zn(2+)</name>
        <dbReference type="ChEBI" id="CHEBI:29105"/>
    </ligand>
</feature>
<feature type="modified residue" description="Phosphoserine" evidence="2">
    <location>
        <position position="197"/>
    </location>
</feature>
<reference key="1">
    <citation type="journal article" date="2004" name="Genome Res.">
        <title>The status, quality, and expansion of the NIH full-length cDNA project: the Mammalian Gene Collection (MGC).</title>
        <authorList>
            <consortium name="The MGC Project Team"/>
        </authorList>
    </citation>
    <scope>NUCLEOTIDE SEQUENCE [LARGE SCALE MRNA]</scope>
    <source>
        <tissue>Kidney</tissue>
    </source>
</reference>
<reference key="2">
    <citation type="submission" date="2006-11" db="UniProtKB">
        <authorList>
            <person name="Lubec G."/>
            <person name="Afjehi-Sadat L."/>
        </authorList>
    </citation>
    <scope>PROTEIN SEQUENCE OF 184-201</scope>
    <scope>IDENTIFICATION BY MASS SPECTROMETRY</scope>
    <source>
        <strain>Sprague-Dawley</strain>
        <tissue>Spinal cord</tissue>
    </source>
</reference>
<proteinExistence type="evidence at protein level"/>
<gene>
    <name type="primary">Nqo2</name>
</gene>
<organism>
    <name type="scientific">Rattus norvegicus</name>
    <name type="common">Rat</name>
    <dbReference type="NCBI Taxonomy" id="10116"/>
    <lineage>
        <taxon>Eukaryota</taxon>
        <taxon>Metazoa</taxon>
        <taxon>Chordata</taxon>
        <taxon>Craniata</taxon>
        <taxon>Vertebrata</taxon>
        <taxon>Euteleostomi</taxon>
        <taxon>Mammalia</taxon>
        <taxon>Eutheria</taxon>
        <taxon>Euarchontoglires</taxon>
        <taxon>Glires</taxon>
        <taxon>Rodentia</taxon>
        <taxon>Myomorpha</taxon>
        <taxon>Muroidea</taxon>
        <taxon>Muridae</taxon>
        <taxon>Murinae</taxon>
        <taxon>Rattus</taxon>
    </lineage>
</organism>
<comment type="function">
    <text evidence="1">The enzyme apparently serves as a quinone reductase in connection with conjugation reactions of hydroquinones involved in detoxification pathways as well as in biosynthetic processes such as the vitamin K-dependent gamma-carboxylation of glutamate residues in prothrombin synthesis.</text>
</comment>
<comment type="catalytic activity">
    <reaction>
        <text>1-(beta-D-ribofuranosyl)-1,4-dihydronicotinamide + a quinone + H(+) = beta-nicotinamide D-riboside + a quinol</text>
        <dbReference type="Rhea" id="RHEA:12364"/>
        <dbReference type="ChEBI" id="CHEBI:15378"/>
        <dbReference type="ChEBI" id="CHEBI:15927"/>
        <dbReference type="ChEBI" id="CHEBI:24646"/>
        <dbReference type="ChEBI" id="CHEBI:55458"/>
        <dbReference type="ChEBI" id="CHEBI:132124"/>
        <dbReference type="EC" id="1.10.5.1"/>
    </reaction>
</comment>
<comment type="cofactor">
    <cofactor evidence="1">
        <name>Zn(2+)</name>
        <dbReference type="ChEBI" id="CHEBI:29105"/>
    </cofactor>
    <text evidence="1">Binds 1 zinc ion per subunit.</text>
</comment>
<comment type="cofactor">
    <cofactor evidence="1">
        <name>FAD</name>
        <dbReference type="ChEBI" id="CHEBI:57692"/>
    </cofactor>
</comment>
<comment type="subunit">
    <text evidence="1">Homodimer.</text>
</comment>
<comment type="subcellular location">
    <subcellularLocation>
        <location evidence="1">Cytoplasm</location>
    </subcellularLocation>
</comment>
<comment type="miscellaneous">
    <text>Uses dihydronicotinamide riboside (NRH) rather than NAD(P)H as an electron donor.</text>
</comment>
<comment type="similarity">
    <text evidence="3">Belongs to the NAD(P)H dehydrogenase (quinone) family.</text>
</comment>
<keyword id="KW-0963">Cytoplasm</keyword>
<keyword id="KW-0903">Direct protein sequencing</keyword>
<keyword id="KW-0274">FAD</keyword>
<keyword id="KW-0285">Flavoprotein</keyword>
<keyword id="KW-0479">Metal-binding</keyword>
<keyword id="KW-0560">Oxidoreductase</keyword>
<keyword id="KW-0597">Phosphoprotein</keyword>
<keyword id="KW-1185">Reference proteome</keyword>
<keyword id="KW-0862">Zinc</keyword>
<protein>
    <recommendedName>
        <fullName>Ribosyldihydronicotinamide dehydrogenase [quinone]</fullName>
        <ecNumber>1.10.5.1</ecNumber>
    </recommendedName>
    <alternativeName>
        <fullName>NRH dehydrogenase [quinone] 2</fullName>
    </alternativeName>
    <alternativeName>
        <fullName>NRH:quinone oxidoreductase 2</fullName>
    </alternativeName>
    <alternativeName>
        <fullName>Quinone reductase 2</fullName>
        <shortName>QR2</shortName>
    </alternativeName>
</protein>
<sequence length="231" mass="26275">MAGKKVLLVYAHQEPKSFNGSMKQVAVEELSKQGCTVTVSDLYTMNFEPRATRNDVTGALSNPEVFKYGIEAYEAYKKKALTSDILEEQRKVQEADLVIFQFPLYWFSVPAILKGWMDRVLCQGFAFDVPGFYDSGFLKDKLALLSFTTGGTAEMYTKAGVNGDFRYFLWPLQHGTLHFCGFKVLAPQISFGPEVSSEEQRKVMLASWVQRLKSIWKEEPIHCTPSWYFQG</sequence>
<name>NQO2_RAT</name>
<evidence type="ECO:0000250" key="1"/>
<evidence type="ECO:0000250" key="2">
    <source>
        <dbReference type="UniProtKB" id="P16083"/>
    </source>
</evidence>
<evidence type="ECO:0000305" key="3"/>
<dbReference type="EC" id="1.10.5.1"/>
<dbReference type="EMBL" id="BC079157">
    <property type="protein sequence ID" value="AAH79157.1"/>
    <property type="molecule type" value="mRNA"/>
</dbReference>
<dbReference type="RefSeq" id="NP_001004214.1">
    <property type="nucleotide sequence ID" value="NM_001004214.1"/>
</dbReference>
<dbReference type="RefSeq" id="XP_006253929.1">
    <property type="nucleotide sequence ID" value="XM_006253867.5"/>
</dbReference>
<dbReference type="RefSeq" id="XP_038951418.1">
    <property type="nucleotide sequence ID" value="XM_039095490.2"/>
</dbReference>
<dbReference type="SMR" id="Q6AY80"/>
<dbReference type="FunCoup" id="Q6AY80">
    <property type="interactions" value="135"/>
</dbReference>
<dbReference type="STRING" id="10116.ENSRNOP00000024141"/>
<dbReference type="PhosphoSitePlus" id="Q6AY80"/>
<dbReference type="PaxDb" id="10116-ENSRNOP00000024141"/>
<dbReference type="GeneID" id="291084"/>
<dbReference type="KEGG" id="rno:291084"/>
<dbReference type="UCSC" id="RGD:1303320">
    <property type="organism name" value="rat"/>
</dbReference>
<dbReference type="AGR" id="RGD:1303320"/>
<dbReference type="CTD" id="4835"/>
<dbReference type="RGD" id="1303320">
    <property type="gene designation" value="Nqo2"/>
</dbReference>
<dbReference type="VEuPathDB" id="HostDB:ENSRNOG00000017820"/>
<dbReference type="eggNOG" id="ENOG502QRQH">
    <property type="taxonomic scope" value="Eukaryota"/>
</dbReference>
<dbReference type="HOGENOM" id="CLU_058643_2_0_1"/>
<dbReference type="InParanoid" id="Q6AY80"/>
<dbReference type="PhylomeDB" id="Q6AY80"/>
<dbReference type="TreeFam" id="TF300296"/>
<dbReference type="Reactome" id="R-RNO-211945">
    <property type="pathway name" value="Phase I - Functionalization of compounds"/>
</dbReference>
<dbReference type="PRO" id="PR:Q6AY80"/>
<dbReference type="Proteomes" id="UP000002494">
    <property type="component" value="Chromosome 17"/>
</dbReference>
<dbReference type="Bgee" id="ENSRNOG00000017820">
    <property type="expression patterns" value="Expressed in heart and 19 other cell types or tissues"/>
</dbReference>
<dbReference type="GO" id="GO:0005829">
    <property type="term" value="C:cytosol"/>
    <property type="evidence" value="ECO:0000318"/>
    <property type="project" value="GO_Central"/>
</dbReference>
<dbReference type="GO" id="GO:0031404">
    <property type="term" value="F:chloride ion binding"/>
    <property type="evidence" value="ECO:0000266"/>
    <property type="project" value="RGD"/>
</dbReference>
<dbReference type="GO" id="GO:0001512">
    <property type="term" value="F:dihydronicotinamide riboside quinone reductase activity"/>
    <property type="evidence" value="ECO:0000266"/>
    <property type="project" value="RGD"/>
</dbReference>
<dbReference type="GO" id="GO:0009055">
    <property type="term" value="F:electron transfer activity"/>
    <property type="evidence" value="ECO:0000266"/>
    <property type="project" value="RGD"/>
</dbReference>
<dbReference type="GO" id="GO:0071949">
    <property type="term" value="F:FAD binding"/>
    <property type="evidence" value="ECO:0000266"/>
    <property type="project" value="RGD"/>
</dbReference>
<dbReference type="GO" id="GO:1904408">
    <property type="term" value="F:melatonin binding"/>
    <property type="evidence" value="ECO:0000266"/>
    <property type="project" value="RGD"/>
</dbReference>
<dbReference type="GO" id="GO:0003955">
    <property type="term" value="F:NAD(P)H dehydrogenase (quinone) activity"/>
    <property type="evidence" value="ECO:0000318"/>
    <property type="project" value="GO_Central"/>
</dbReference>
<dbReference type="GO" id="GO:0016491">
    <property type="term" value="F:oxidoreductase activity"/>
    <property type="evidence" value="ECO:0000266"/>
    <property type="project" value="RGD"/>
</dbReference>
<dbReference type="GO" id="GO:0016661">
    <property type="term" value="F:oxidoreductase activity, acting on other nitrogenous compounds as donors"/>
    <property type="evidence" value="ECO:0000266"/>
    <property type="project" value="RGD"/>
</dbReference>
<dbReference type="GO" id="GO:0042803">
    <property type="term" value="F:protein homodimerization activity"/>
    <property type="evidence" value="ECO:0000266"/>
    <property type="project" value="RGD"/>
</dbReference>
<dbReference type="GO" id="GO:1905594">
    <property type="term" value="F:resveratrol binding"/>
    <property type="evidence" value="ECO:0000266"/>
    <property type="project" value="RGD"/>
</dbReference>
<dbReference type="GO" id="GO:0008270">
    <property type="term" value="F:zinc ion binding"/>
    <property type="evidence" value="ECO:0000266"/>
    <property type="project" value="RGD"/>
</dbReference>
<dbReference type="GO" id="GO:0007613">
    <property type="term" value="P:memory"/>
    <property type="evidence" value="ECO:0000270"/>
    <property type="project" value="RGD"/>
</dbReference>
<dbReference type="GO" id="GO:0070374">
    <property type="term" value="P:positive regulation of ERK1 and ERK2 cascade"/>
    <property type="evidence" value="ECO:0000315"/>
    <property type="project" value="RGD"/>
</dbReference>
<dbReference type="GO" id="GO:0043525">
    <property type="term" value="P:positive regulation of neuron apoptotic process"/>
    <property type="evidence" value="ECO:0000315"/>
    <property type="project" value="RGD"/>
</dbReference>
<dbReference type="GO" id="GO:2000379">
    <property type="term" value="P:positive regulation of reactive oxygen species metabolic process"/>
    <property type="evidence" value="ECO:0000315"/>
    <property type="project" value="RGD"/>
</dbReference>
<dbReference type="GO" id="GO:1904707">
    <property type="term" value="P:positive regulation of vascular associated smooth muscle cell proliferation"/>
    <property type="evidence" value="ECO:0000315"/>
    <property type="project" value="RGD"/>
</dbReference>
<dbReference type="GO" id="GO:1901662">
    <property type="term" value="P:quinone catabolic process"/>
    <property type="evidence" value="ECO:0000266"/>
    <property type="project" value="RGD"/>
</dbReference>
<dbReference type="FunFam" id="3.40.50.360:FF:000030">
    <property type="entry name" value="ribosyldihydronicotinamide dehydrogenase [quinone]"/>
    <property type="match status" value="1"/>
</dbReference>
<dbReference type="Gene3D" id="3.40.50.360">
    <property type="match status" value="1"/>
</dbReference>
<dbReference type="InterPro" id="IPR003680">
    <property type="entry name" value="Flavodoxin_fold"/>
</dbReference>
<dbReference type="InterPro" id="IPR029039">
    <property type="entry name" value="Flavoprotein-like_sf"/>
</dbReference>
<dbReference type="InterPro" id="IPR051545">
    <property type="entry name" value="NAD(P)H_dehydrogenase_qn"/>
</dbReference>
<dbReference type="PANTHER" id="PTHR10204">
    <property type="entry name" value="NAD P H OXIDOREDUCTASE-RELATED"/>
    <property type="match status" value="1"/>
</dbReference>
<dbReference type="PANTHER" id="PTHR10204:SF33">
    <property type="entry name" value="RIBOSYLDIHYDRONICOTINAMIDE DEHYDROGENASE [QUINONE]"/>
    <property type="match status" value="1"/>
</dbReference>
<dbReference type="Pfam" id="PF02525">
    <property type="entry name" value="Flavodoxin_2"/>
    <property type="match status" value="1"/>
</dbReference>
<dbReference type="SUPFAM" id="SSF52218">
    <property type="entry name" value="Flavoproteins"/>
    <property type="match status" value="1"/>
</dbReference>
<accession>Q6AY80</accession>